<keyword id="KW-0150">Chloroplast</keyword>
<keyword id="KW-0249">Electron transport</keyword>
<keyword id="KW-0472">Membrane</keyword>
<keyword id="KW-0602">Photosynthesis</keyword>
<keyword id="KW-0934">Plastid</keyword>
<keyword id="KW-0793">Thylakoid</keyword>
<keyword id="KW-0812">Transmembrane</keyword>
<keyword id="KW-1133">Transmembrane helix</keyword>
<keyword id="KW-0813">Transport</keyword>
<accession>A6MME0</accession>
<reference key="1">
    <citation type="journal article" date="2007" name="Mol. Phylogenet. Evol.">
        <title>Phylogenetic and evolutionary implications of complete chloroplast genome sequences of four early-diverging angiosperms: Buxus (Buxaceae), Chloranthus (Chloranthaceae), Dioscorea (Dioscoreaceae), and Illicium (Schisandraceae).</title>
        <authorList>
            <person name="Hansen D.R."/>
            <person name="Dastidar S.G."/>
            <person name="Cai Z."/>
            <person name="Penaflor C."/>
            <person name="Kuehl J.V."/>
            <person name="Boore J.L."/>
            <person name="Jansen R.K."/>
        </authorList>
    </citation>
    <scope>NUCLEOTIDE SEQUENCE [LARGE SCALE GENOMIC DNA]</scope>
</reference>
<protein>
    <recommendedName>
        <fullName evidence="1">Cytochrome b6-f complex subunit 6</fullName>
    </recommendedName>
    <alternativeName>
        <fullName evidence="1">Cytochrome b6-f complex subunit PetL</fullName>
    </alternativeName>
    <alternativeName>
        <fullName evidence="1">Cytochrome b6-f complex subunit VI</fullName>
    </alternativeName>
</protein>
<gene>
    <name evidence="1" type="primary">petL</name>
</gene>
<dbReference type="EMBL" id="EF380352">
    <property type="protein sequence ID" value="ABQ43278.1"/>
    <property type="molecule type" value="Genomic_DNA"/>
</dbReference>
<dbReference type="RefSeq" id="YP_001294116.1">
    <property type="nucleotide sequence ID" value="NC_009598.1"/>
</dbReference>
<dbReference type="SMR" id="A6MME0"/>
<dbReference type="GeneID" id="5236515"/>
<dbReference type="GO" id="GO:0009535">
    <property type="term" value="C:chloroplast thylakoid membrane"/>
    <property type="evidence" value="ECO:0007669"/>
    <property type="project" value="UniProtKB-SubCell"/>
</dbReference>
<dbReference type="GO" id="GO:0009512">
    <property type="term" value="C:cytochrome b6f complex"/>
    <property type="evidence" value="ECO:0007669"/>
    <property type="project" value="InterPro"/>
</dbReference>
<dbReference type="GO" id="GO:0045158">
    <property type="term" value="F:electron transporter, transferring electrons within cytochrome b6/f complex of photosystem II activity"/>
    <property type="evidence" value="ECO:0007669"/>
    <property type="project" value="UniProtKB-UniRule"/>
</dbReference>
<dbReference type="GO" id="GO:0015979">
    <property type="term" value="P:photosynthesis"/>
    <property type="evidence" value="ECO:0007669"/>
    <property type="project" value="UniProtKB-KW"/>
</dbReference>
<dbReference type="HAMAP" id="MF_00433">
    <property type="entry name" value="Cytb6_f_PetL"/>
    <property type="match status" value="1"/>
</dbReference>
<dbReference type="InterPro" id="IPR007802">
    <property type="entry name" value="Cyt_b6/f_cplx_su6"/>
</dbReference>
<dbReference type="PANTHER" id="PTHR37266">
    <property type="entry name" value="CYTOCHROME B6-F COMPLEX SUBUNIT 6"/>
    <property type="match status" value="1"/>
</dbReference>
<dbReference type="PANTHER" id="PTHR37266:SF1">
    <property type="entry name" value="CYTOCHROME B6-F COMPLEX SUBUNIT 6"/>
    <property type="match status" value="1"/>
</dbReference>
<dbReference type="Pfam" id="PF05115">
    <property type="entry name" value="PetL"/>
    <property type="match status" value="1"/>
</dbReference>
<proteinExistence type="inferred from homology"/>
<organism>
    <name type="scientific">Chloranthus spicatus</name>
    <name type="common">Chulantree</name>
    <name type="synonym">Nigrina spicata</name>
    <dbReference type="NCBI Taxonomy" id="13006"/>
    <lineage>
        <taxon>Eukaryota</taxon>
        <taxon>Viridiplantae</taxon>
        <taxon>Streptophyta</taxon>
        <taxon>Embryophyta</taxon>
        <taxon>Tracheophyta</taxon>
        <taxon>Spermatophyta</taxon>
        <taxon>Magnoliopsida</taxon>
        <taxon>Chloranthales</taxon>
        <taxon>Chloranthaceae</taxon>
        <taxon>Chloranthus</taxon>
    </lineage>
</organism>
<feature type="chain" id="PRO_0000300138" description="Cytochrome b6-f complex subunit 6">
    <location>
        <begin position="1"/>
        <end position="31"/>
    </location>
</feature>
<feature type="transmembrane region" description="Helical" evidence="1">
    <location>
        <begin position="4"/>
        <end position="26"/>
    </location>
</feature>
<name>PETL_CHLSC</name>
<sequence>MPTITSYFGFLLAASTITSALLIGLSKIRLI</sequence>
<evidence type="ECO:0000255" key="1">
    <source>
        <dbReference type="HAMAP-Rule" id="MF_00433"/>
    </source>
</evidence>
<comment type="function">
    <text evidence="1">Component of the cytochrome b6-f complex, which mediates electron transfer between photosystem II (PSII) and photosystem I (PSI), cyclic electron flow around PSI, and state transitions. PetL is important for photoautotrophic growth as well as for electron transfer efficiency and stability of the cytochrome b6-f complex.</text>
</comment>
<comment type="subunit">
    <text evidence="1">The 4 large subunits of the cytochrome b6-f complex are cytochrome b6, subunit IV (17 kDa polypeptide, PetD), cytochrome f and the Rieske protein, while the 4 small subunits are PetG, PetL, PetM and PetN. The complex functions as a dimer.</text>
</comment>
<comment type="subcellular location">
    <subcellularLocation>
        <location evidence="1">Plastid</location>
        <location evidence="1">Chloroplast thylakoid membrane</location>
        <topology evidence="1">Single-pass membrane protein</topology>
    </subcellularLocation>
</comment>
<comment type="similarity">
    <text evidence="1">Belongs to the PetL family.</text>
</comment>
<geneLocation type="chloroplast"/>